<gene>
    <name evidence="4" type="ordered locus">STM4068</name>
</gene>
<evidence type="ECO:0000255" key="1">
    <source>
        <dbReference type="PROSITE-ProRule" id="PRU00307"/>
    </source>
</evidence>
<evidence type="ECO:0000269" key="2">
    <source>
    </source>
</evidence>
<evidence type="ECO:0000305" key="3"/>
<evidence type="ECO:0000312" key="4">
    <source>
        <dbReference type="EMBL" id="AAL22908.1"/>
    </source>
</evidence>
<comment type="function">
    <text evidence="2">Represses the expression of the STM4065-STM4067 operon.</text>
</comment>
<comment type="disruption phenotype">
    <text evidence="2">Null mutant gains the ability to efficiently use exogenous aminoimidazole riboside (AIRs) as a source of thiamine.</text>
</comment>
<keyword id="KW-0238">DNA-binding</keyword>
<keyword id="KW-1185">Reference proteome</keyword>
<keyword id="KW-0678">Repressor</keyword>
<keyword id="KW-0804">Transcription</keyword>
<keyword id="KW-0805">Transcription regulation</keyword>
<organism>
    <name type="scientific">Salmonella typhimurium (strain LT2 / SGSC1412 / ATCC 700720)</name>
    <dbReference type="NCBI Taxonomy" id="99287"/>
    <lineage>
        <taxon>Bacteria</taxon>
        <taxon>Pseudomonadati</taxon>
        <taxon>Pseudomonadota</taxon>
        <taxon>Gammaproteobacteria</taxon>
        <taxon>Enterobacterales</taxon>
        <taxon>Enterobacteriaceae</taxon>
        <taxon>Salmonella</taxon>
    </lineage>
</organism>
<feature type="chain" id="PRO_0000452104" description="HTH-type transcriptional repressor STM4068">
    <location>
        <begin position="1"/>
        <end position="240"/>
    </location>
</feature>
<feature type="domain" description="HTH gntR-type" evidence="1">
    <location>
        <begin position="9"/>
        <end position="77"/>
    </location>
</feature>
<feature type="DNA-binding region" description="H-T-H motif" evidence="1">
    <location>
        <begin position="37"/>
        <end position="56"/>
    </location>
</feature>
<protein>
    <recommendedName>
        <fullName evidence="3">HTH-type transcriptional repressor STM4068</fullName>
    </recommendedName>
</protein>
<dbReference type="EMBL" id="AE006468">
    <property type="protein sequence ID" value="AAL22908.1"/>
    <property type="molecule type" value="Genomic_DNA"/>
</dbReference>
<dbReference type="RefSeq" id="NP_462949.1">
    <property type="nucleotide sequence ID" value="NC_003197.2"/>
</dbReference>
<dbReference type="RefSeq" id="WP_001519915.1">
    <property type="nucleotide sequence ID" value="NC_003197.2"/>
</dbReference>
<dbReference type="SMR" id="Q8ZKR0"/>
<dbReference type="STRING" id="99287.STM4068"/>
<dbReference type="PaxDb" id="99287-STM4068"/>
<dbReference type="GeneID" id="1255595"/>
<dbReference type="KEGG" id="stm:STM4068"/>
<dbReference type="PATRIC" id="fig|99287.12.peg.4288"/>
<dbReference type="HOGENOM" id="CLU_063236_4_2_6"/>
<dbReference type="OMA" id="FLPEHYT"/>
<dbReference type="PhylomeDB" id="Q8ZKR0"/>
<dbReference type="BioCyc" id="SENT99287:STM4068-MONOMER"/>
<dbReference type="Proteomes" id="UP000001014">
    <property type="component" value="Chromosome"/>
</dbReference>
<dbReference type="GO" id="GO:0003677">
    <property type="term" value="F:DNA binding"/>
    <property type="evidence" value="ECO:0007669"/>
    <property type="project" value="UniProtKB-KW"/>
</dbReference>
<dbReference type="GO" id="GO:0003700">
    <property type="term" value="F:DNA-binding transcription factor activity"/>
    <property type="evidence" value="ECO:0007669"/>
    <property type="project" value="InterPro"/>
</dbReference>
<dbReference type="GO" id="GO:0045892">
    <property type="term" value="P:negative regulation of DNA-templated transcription"/>
    <property type="evidence" value="ECO:0000318"/>
    <property type="project" value="GO_Central"/>
</dbReference>
<dbReference type="CDD" id="cd07377">
    <property type="entry name" value="WHTH_GntR"/>
    <property type="match status" value="1"/>
</dbReference>
<dbReference type="Gene3D" id="3.40.1410.10">
    <property type="entry name" value="Chorismate lyase-like"/>
    <property type="match status" value="1"/>
</dbReference>
<dbReference type="Gene3D" id="1.10.10.10">
    <property type="entry name" value="Winged helix-like DNA-binding domain superfamily/Winged helix DNA-binding domain"/>
    <property type="match status" value="1"/>
</dbReference>
<dbReference type="InterPro" id="IPR050679">
    <property type="entry name" value="Bact_HTH_transcr_reg"/>
</dbReference>
<dbReference type="InterPro" id="IPR028978">
    <property type="entry name" value="Chorismate_lyase_/UTRA_dom_sf"/>
</dbReference>
<dbReference type="InterPro" id="IPR000524">
    <property type="entry name" value="Tscrpt_reg_HTH_GntR"/>
</dbReference>
<dbReference type="InterPro" id="IPR011663">
    <property type="entry name" value="UTRA"/>
</dbReference>
<dbReference type="InterPro" id="IPR036388">
    <property type="entry name" value="WH-like_DNA-bd_sf"/>
</dbReference>
<dbReference type="InterPro" id="IPR036390">
    <property type="entry name" value="WH_DNA-bd_sf"/>
</dbReference>
<dbReference type="PANTHER" id="PTHR44846">
    <property type="entry name" value="MANNOSYL-D-GLYCERATE TRANSPORT/METABOLISM SYSTEM REPRESSOR MNGR-RELATED"/>
    <property type="match status" value="1"/>
</dbReference>
<dbReference type="PANTHER" id="PTHR44846:SF1">
    <property type="entry name" value="MANNOSYL-D-GLYCERATE TRANSPORT_METABOLISM SYSTEM REPRESSOR MNGR-RELATED"/>
    <property type="match status" value="1"/>
</dbReference>
<dbReference type="Pfam" id="PF00392">
    <property type="entry name" value="GntR"/>
    <property type="match status" value="1"/>
</dbReference>
<dbReference type="Pfam" id="PF07702">
    <property type="entry name" value="UTRA"/>
    <property type="match status" value="1"/>
</dbReference>
<dbReference type="SMART" id="SM00345">
    <property type="entry name" value="HTH_GNTR"/>
    <property type="match status" value="1"/>
</dbReference>
<dbReference type="SMART" id="SM00866">
    <property type="entry name" value="UTRA"/>
    <property type="match status" value="1"/>
</dbReference>
<dbReference type="SUPFAM" id="SSF64288">
    <property type="entry name" value="Chorismate lyase-like"/>
    <property type="match status" value="1"/>
</dbReference>
<dbReference type="SUPFAM" id="SSF46785">
    <property type="entry name" value="Winged helix' DNA-binding domain"/>
    <property type="match status" value="1"/>
</dbReference>
<dbReference type="PROSITE" id="PS50949">
    <property type="entry name" value="HTH_GNTR"/>
    <property type="match status" value="1"/>
</dbReference>
<reference key="1">
    <citation type="journal article" date="2001" name="Nature">
        <title>Complete genome sequence of Salmonella enterica serovar Typhimurium LT2.</title>
        <authorList>
            <person name="McClelland M."/>
            <person name="Sanderson K.E."/>
            <person name="Spieth J."/>
            <person name="Clifton S.W."/>
            <person name="Latreille P."/>
            <person name="Courtney L."/>
            <person name="Porwollik S."/>
            <person name="Ali J."/>
            <person name="Dante M."/>
            <person name="Du F."/>
            <person name="Hou S."/>
            <person name="Layman D."/>
            <person name="Leonard S."/>
            <person name="Nguyen C."/>
            <person name="Scott K."/>
            <person name="Holmes A."/>
            <person name="Grewal N."/>
            <person name="Mulvaney E."/>
            <person name="Ryan E."/>
            <person name="Sun H."/>
            <person name="Florea L."/>
            <person name="Miller W."/>
            <person name="Stoneking T."/>
            <person name="Nhan M."/>
            <person name="Waterston R."/>
            <person name="Wilson R.K."/>
        </authorList>
    </citation>
    <scope>NUCLEOTIDE SEQUENCE [LARGE SCALE GENOMIC DNA]</scope>
    <source>
        <strain>LT2 / SGSC1412 / ATCC 700720</strain>
    </source>
</reference>
<reference key="2">
    <citation type="journal article" date="2003" name="J. Bacteriol.">
        <title>The stm4066 gene product of Salmonella enterica serovar Typhimurium has aminoimidazole riboside (AIRs) kinase activity and allows AIRs to satisfy the thiamine requirement of pur mutant strains.</title>
        <authorList>
            <person name="Dougherty M."/>
            <person name="Downs D.M."/>
        </authorList>
    </citation>
    <scope>FUNCTION</scope>
    <scope>DISRUPTION PHENOTYPE</scope>
    <source>
        <strain>LT2</strain>
    </source>
</reference>
<sequence>MQVDKTSFTPLYKQLFFIICQQIQNGSLPLGSQLPTQKEIARSYNVSLIVVKQAWSELINAGIISSQRGSGSVVCSVPEGVSYGHTFRGITRDLQDASVAIENRILEIAPRRARDAQADGLSLPAQHHYLYISRIRCLNNRPFNHEKIYLDLSFFPGLELTPQALEHTSLYSLLNVTSDSAIEKVEAILPSADLCEKLQIAANKPLLSVARQTFQAGKDSPFEYCRYYVLSEYFGEIHYH</sequence>
<accession>Q8ZKR0</accession>
<name>AIRSR_SALTY</name>
<proteinExistence type="predicted"/>